<organism>
    <name type="scientific">Danio rerio</name>
    <name type="common">Zebrafish</name>
    <name type="synonym">Brachydanio rerio</name>
    <dbReference type="NCBI Taxonomy" id="7955"/>
    <lineage>
        <taxon>Eukaryota</taxon>
        <taxon>Metazoa</taxon>
        <taxon>Chordata</taxon>
        <taxon>Craniata</taxon>
        <taxon>Vertebrata</taxon>
        <taxon>Euteleostomi</taxon>
        <taxon>Actinopterygii</taxon>
        <taxon>Neopterygii</taxon>
        <taxon>Teleostei</taxon>
        <taxon>Ostariophysi</taxon>
        <taxon>Cypriniformes</taxon>
        <taxon>Danionidae</taxon>
        <taxon>Danioninae</taxon>
        <taxon>Danio</taxon>
    </lineage>
</organism>
<name>FSTA_DANRE</name>
<evidence type="ECO:0000250" key="1"/>
<evidence type="ECO:0000255" key="2"/>
<evidence type="ECO:0000255" key="3">
    <source>
        <dbReference type="PROSITE-ProRule" id="PRU00697"/>
    </source>
</evidence>
<evidence type="ECO:0000255" key="4">
    <source>
        <dbReference type="PROSITE-ProRule" id="PRU00798"/>
    </source>
</evidence>
<evidence type="ECO:0000269" key="5">
    <source>
    </source>
</evidence>
<evidence type="ECO:0000269" key="6">
    <source>
    </source>
</evidence>
<evidence type="ECO:0000305" key="7"/>
<accession>Q9YHV4</accession>
<accession>A5PMK3</accession>
<accession>A7MC96</accession>
<accession>Q6DC45</accession>
<gene>
    <name type="primary">fsta</name>
    <name type="synonym">fst</name>
    <name type="synonym">fst1</name>
    <name type="ORF">si:dkey-111k10.2</name>
    <name type="ORF">si:dkeyp-88a5.1</name>
</gene>
<proteinExistence type="evidence at transcript level"/>
<sequence length="322" mass="35517">MLRMLKRQQLHPGMILLLFWLCYLIEDQKVQAGNCWLQQGKNGRCQVLYMPGMSREECCRSGRLGTSWTEEDVPNSTLFRWMIFNGGAPNCIPCKETCDNVDCGPGKRCKMNRRSKPRCVCAPDCSNVTWKGPVCGSDGKTYRDECALLKSKCKGHPDLEVQYQGKCKKTCRDVLCPGSSTCVVDQTNNAYCVTCNRICPEVMSPDQYLCGNDGIVYASACHLRRATCLLGRSIGVAYEGKCIKAKSCDDIHCSAGKKCLWDAKMSRGRCAVCAESCPESRSEEAVCASDNTTYPSECAMKQAACSLGVLLEVKHSGSCNCK</sequence>
<keyword id="KW-0025">Alternative splicing</keyword>
<keyword id="KW-0217">Developmental protein</keyword>
<keyword id="KW-1015">Disulfide bond</keyword>
<keyword id="KW-0325">Glycoprotein</keyword>
<keyword id="KW-1185">Reference proteome</keyword>
<keyword id="KW-0677">Repeat</keyword>
<keyword id="KW-0732">Signal</keyword>
<comment type="function">
    <text evidence="1 5 6">Binds directly to activin and functions as an activin antagonist. Specific inhibitor of the biosynthesis and secretion of pituitary follicle stimulating hormone (fsh) (By similarity). Inhibits bmp-signaling during later stages of development including late phases of dorsoventral patterning, to refine the early pattern set up by the interaction of chordino and bmp2/4. Not involved in organizer function or early phases of dorsoventral pattern formation.</text>
</comment>
<comment type="subunit">
    <text evidence="7">Monomer.</text>
</comment>
<comment type="alternative products">
    <event type="alternative splicing"/>
    <isoform>
        <id>Q9YHV4-1</id>
        <name>1</name>
        <sequence type="displayed"/>
    </isoform>
    <isoform>
        <id>Q9YHV4-2</id>
        <name>2</name>
        <sequence type="described" ref="VSP_034660"/>
    </isoform>
</comment>
<comment type="tissue specificity">
    <text evidence="5 6">Not expressed in the organizer region. Expression in gastrulating embryos is confined to anterior and paraxial regions, which give rise to head mesoderm and the first five somites. In addition, expressed transiently in a subset of cells in the posterior notochord anlage. Later, expression is seen in brain, eyes and somites.</text>
</comment>
<comment type="developmental stage">
    <text evidence="6">First expressed at mid-gastrulation.</text>
</comment>
<protein>
    <recommendedName>
        <fullName>Follistatin-A</fullName>
        <shortName>FS</shortName>
    </recommendedName>
    <alternativeName>
        <fullName>Activin-binding protein</fullName>
    </alternativeName>
    <alternativeName>
        <fullName>Follistatin-1</fullName>
        <shortName>zFst1</shortName>
    </alternativeName>
</protein>
<reference key="1">
    <citation type="journal article" date="1998" name="Dev. Biol.">
        <title>Follistatin and noggin are excluded from the zebrafish organizer.</title>
        <authorList>
            <person name="Bauer H."/>
            <person name="Meier A."/>
            <person name="Hild M."/>
            <person name="Stachel S."/>
            <person name="Economides A."/>
            <person name="Hazelett D."/>
            <person name="Harland R.M."/>
            <person name="Hammerschmidt M."/>
        </authorList>
    </citation>
    <scope>NUCLEOTIDE SEQUENCE [MRNA] (ISOFORM 1)</scope>
    <scope>FUNCTION</scope>
    <scope>TISSUE SPECIFICITY</scope>
    <scope>DEVELOPMENTAL STAGE</scope>
    <source>
        <tissue>Gastrula</tissue>
    </source>
</reference>
<reference key="2">
    <citation type="journal article" date="2006" name="Dev. Biol.">
        <title>Noggin1 and Follistatin-like2 function redundantly to Chordin to antagonize BMP activity.</title>
        <authorList>
            <person name="Dal-Pra S."/>
            <person name="Fuerthauer M."/>
            <person name="Van-Celst J."/>
            <person name="Thisse B."/>
            <person name="Thisse C."/>
        </authorList>
    </citation>
    <scope>NUCLEOTIDE SEQUENCE [MRNA] (ISOFORM 1)</scope>
    <scope>FUNCTION</scope>
    <scope>TISSUE SPECIFICITY</scope>
</reference>
<reference key="3">
    <citation type="journal article" date="2013" name="Nature">
        <title>The zebrafish reference genome sequence and its relationship to the human genome.</title>
        <authorList>
            <person name="Howe K."/>
            <person name="Clark M.D."/>
            <person name="Torroja C.F."/>
            <person name="Torrance J."/>
            <person name="Berthelot C."/>
            <person name="Muffato M."/>
            <person name="Collins J.E."/>
            <person name="Humphray S."/>
            <person name="McLaren K."/>
            <person name="Matthews L."/>
            <person name="McLaren S."/>
            <person name="Sealy I."/>
            <person name="Caccamo M."/>
            <person name="Churcher C."/>
            <person name="Scott C."/>
            <person name="Barrett J.C."/>
            <person name="Koch R."/>
            <person name="Rauch G.J."/>
            <person name="White S."/>
            <person name="Chow W."/>
            <person name="Kilian B."/>
            <person name="Quintais L.T."/>
            <person name="Guerra-Assuncao J.A."/>
            <person name="Zhou Y."/>
            <person name="Gu Y."/>
            <person name="Yen J."/>
            <person name="Vogel J.H."/>
            <person name="Eyre T."/>
            <person name="Redmond S."/>
            <person name="Banerjee R."/>
            <person name="Chi J."/>
            <person name="Fu B."/>
            <person name="Langley E."/>
            <person name="Maguire S.F."/>
            <person name="Laird G.K."/>
            <person name="Lloyd D."/>
            <person name="Kenyon E."/>
            <person name="Donaldson S."/>
            <person name="Sehra H."/>
            <person name="Almeida-King J."/>
            <person name="Loveland J."/>
            <person name="Trevanion S."/>
            <person name="Jones M."/>
            <person name="Quail M."/>
            <person name="Willey D."/>
            <person name="Hunt A."/>
            <person name="Burton J."/>
            <person name="Sims S."/>
            <person name="McLay K."/>
            <person name="Plumb B."/>
            <person name="Davis J."/>
            <person name="Clee C."/>
            <person name="Oliver K."/>
            <person name="Clark R."/>
            <person name="Riddle C."/>
            <person name="Elliot D."/>
            <person name="Threadgold G."/>
            <person name="Harden G."/>
            <person name="Ware D."/>
            <person name="Begum S."/>
            <person name="Mortimore B."/>
            <person name="Kerry G."/>
            <person name="Heath P."/>
            <person name="Phillimore B."/>
            <person name="Tracey A."/>
            <person name="Corby N."/>
            <person name="Dunn M."/>
            <person name="Johnson C."/>
            <person name="Wood J."/>
            <person name="Clark S."/>
            <person name="Pelan S."/>
            <person name="Griffiths G."/>
            <person name="Smith M."/>
            <person name="Glithero R."/>
            <person name="Howden P."/>
            <person name="Barker N."/>
            <person name="Lloyd C."/>
            <person name="Stevens C."/>
            <person name="Harley J."/>
            <person name="Holt K."/>
            <person name="Panagiotidis G."/>
            <person name="Lovell J."/>
            <person name="Beasley H."/>
            <person name="Henderson C."/>
            <person name="Gordon D."/>
            <person name="Auger K."/>
            <person name="Wright D."/>
            <person name="Collins J."/>
            <person name="Raisen C."/>
            <person name="Dyer L."/>
            <person name="Leung K."/>
            <person name="Robertson L."/>
            <person name="Ambridge K."/>
            <person name="Leongamornlert D."/>
            <person name="McGuire S."/>
            <person name="Gilderthorp R."/>
            <person name="Griffiths C."/>
            <person name="Manthravadi D."/>
            <person name="Nichol S."/>
            <person name="Barker G."/>
            <person name="Whitehead S."/>
            <person name="Kay M."/>
            <person name="Brown J."/>
            <person name="Murnane C."/>
            <person name="Gray E."/>
            <person name="Humphries M."/>
            <person name="Sycamore N."/>
            <person name="Barker D."/>
            <person name="Saunders D."/>
            <person name="Wallis J."/>
            <person name="Babbage A."/>
            <person name="Hammond S."/>
            <person name="Mashreghi-Mohammadi M."/>
            <person name="Barr L."/>
            <person name="Martin S."/>
            <person name="Wray P."/>
            <person name="Ellington A."/>
            <person name="Matthews N."/>
            <person name="Ellwood M."/>
            <person name="Woodmansey R."/>
            <person name="Clark G."/>
            <person name="Cooper J."/>
            <person name="Tromans A."/>
            <person name="Grafham D."/>
            <person name="Skuce C."/>
            <person name="Pandian R."/>
            <person name="Andrews R."/>
            <person name="Harrison E."/>
            <person name="Kimberley A."/>
            <person name="Garnett J."/>
            <person name="Fosker N."/>
            <person name="Hall R."/>
            <person name="Garner P."/>
            <person name="Kelly D."/>
            <person name="Bird C."/>
            <person name="Palmer S."/>
            <person name="Gehring I."/>
            <person name="Berger A."/>
            <person name="Dooley C.M."/>
            <person name="Ersan-Urun Z."/>
            <person name="Eser C."/>
            <person name="Geiger H."/>
            <person name="Geisler M."/>
            <person name="Karotki L."/>
            <person name="Kirn A."/>
            <person name="Konantz J."/>
            <person name="Konantz M."/>
            <person name="Oberlander M."/>
            <person name="Rudolph-Geiger S."/>
            <person name="Teucke M."/>
            <person name="Lanz C."/>
            <person name="Raddatz G."/>
            <person name="Osoegawa K."/>
            <person name="Zhu B."/>
            <person name="Rapp A."/>
            <person name="Widaa S."/>
            <person name="Langford C."/>
            <person name="Yang F."/>
            <person name="Schuster S.C."/>
            <person name="Carter N.P."/>
            <person name="Harrow J."/>
            <person name="Ning Z."/>
            <person name="Herrero J."/>
            <person name="Searle S.M."/>
            <person name="Enright A."/>
            <person name="Geisler R."/>
            <person name="Plasterk R.H."/>
            <person name="Lee C."/>
            <person name="Westerfield M."/>
            <person name="de Jong P.J."/>
            <person name="Zon L.I."/>
            <person name="Postlethwait J.H."/>
            <person name="Nusslein-Volhard C."/>
            <person name="Hubbard T.J."/>
            <person name="Roest Crollius H."/>
            <person name="Rogers J."/>
            <person name="Stemple D.L."/>
        </authorList>
    </citation>
    <scope>NUCLEOTIDE SEQUENCE [LARGE SCALE GENOMIC DNA]</scope>
    <source>
        <strain>Tuebingen</strain>
    </source>
</reference>
<reference key="4">
    <citation type="submission" date="2007-08" db="EMBL/GenBank/DDBJ databases">
        <authorList>
            <consortium name="NIH - Zebrafish Gene Collection (ZGC) project"/>
        </authorList>
    </citation>
    <scope>NUCLEOTIDE SEQUENCE [LARGE SCALE MRNA] (ISOFORM 1)</scope>
    <source>
        <tissue>Embryo</tissue>
        <tissue>Larva</tissue>
    </source>
</reference>
<feature type="signal peptide" evidence="2">
    <location>
        <begin position="1"/>
        <end position="32"/>
    </location>
</feature>
<feature type="chain" id="PRO_0000010109" description="Follistatin-A">
    <location>
        <begin position="33"/>
        <end position="322"/>
    </location>
</feature>
<feature type="domain" description="TB" evidence="3">
    <location>
        <begin position="33"/>
        <end position="106"/>
    </location>
</feature>
<feature type="domain" description="Follistatin-like 1">
    <location>
        <begin position="97"/>
        <end position="120"/>
    </location>
</feature>
<feature type="domain" description="Kazal-like 1" evidence="4">
    <location>
        <begin position="103"/>
        <end position="169"/>
    </location>
</feature>
<feature type="domain" description="Follistatin-like 2">
    <location>
        <begin position="170"/>
        <end position="193"/>
    </location>
</feature>
<feature type="domain" description="Kazal-like 2" evidence="4">
    <location>
        <begin position="189"/>
        <end position="244"/>
    </location>
</feature>
<feature type="domain" description="Follistatin-like 3">
    <location>
        <begin position="247"/>
        <end position="271"/>
    </location>
</feature>
<feature type="domain" description="Kazal-like 3" evidence="4">
    <location>
        <begin position="267"/>
        <end position="321"/>
    </location>
</feature>
<feature type="glycosylation site" description="N-linked (GlcNAc...) asparagine" evidence="2">
    <location>
        <position position="75"/>
    </location>
</feature>
<feature type="glycosylation site" description="N-linked (GlcNAc...) asparagine" evidence="2">
    <location>
        <position position="127"/>
    </location>
</feature>
<feature type="glycosylation site" description="N-linked (GlcNAc...) asparagine" evidence="2">
    <location>
        <position position="291"/>
    </location>
</feature>
<feature type="disulfide bond" evidence="3">
    <location>
        <begin position="35"/>
        <end position="58"/>
    </location>
</feature>
<feature type="disulfide bond" evidence="3">
    <location>
        <begin position="45"/>
        <end position="91"/>
    </location>
</feature>
<feature type="disulfide bond" evidence="3">
    <location>
        <begin position="59"/>
        <end position="94"/>
    </location>
</feature>
<feature type="disulfide bond" evidence="4">
    <location>
        <begin position="98"/>
        <end position="109"/>
    </location>
</feature>
<feature type="disulfide bond" evidence="4">
    <location>
        <begin position="103"/>
        <end position="119"/>
    </location>
</feature>
<feature type="disulfide bond" evidence="4">
    <location>
        <begin position="121"/>
        <end position="153"/>
    </location>
</feature>
<feature type="disulfide bond" evidence="4">
    <location>
        <begin position="125"/>
        <end position="146"/>
    </location>
</feature>
<feature type="disulfide bond" evidence="4">
    <location>
        <begin position="135"/>
        <end position="167"/>
    </location>
</feature>
<feature type="disulfide bond" evidence="4">
    <location>
        <begin position="195"/>
        <end position="228"/>
    </location>
</feature>
<feature type="disulfide bond" evidence="4">
    <location>
        <begin position="199"/>
        <end position="221"/>
    </location>
</feature>
<feature type="disulfide bond" evidence="4">
    <location>
        <begin position="210"/>
        <end position="242"/>
    </location>
</feature>
<feature type="disulfide bond" evidence="4">
    <location>
        <begin position="273"/>
        <end position="305"/>
    </location>
</feature>
<feature type="disulfide bond" evidence="4">
    <location>
        <begin position="277"/>
        <end position="298"/>
    </location>
</feature>
<feature type="disulfide bond" evidence="4">
    <location>
        <begin position="287"/>
        <end position="319"/>
    </location>
</feature>
<feature type="splice variant" id="VSP_034660" description="In isoform 2." evidence="7">
    <original>SECAMKQAACSLGVLLEVKHSGSCNCK</original>
    <variation>TITEDQEDDDDEEDQDYMAYVQLSPVLDG</variation>
    <location>
        <begin position="296"/>
        <end position="322"/>
    </location>
</feature>
<feature type="sequence conflict" description="In Ref. 1; AAD09175." evidence="7" ref="1">
    <original>V</original>
    <variation>I</variation>
    <location>
        <position position="216"/>
    </location>
</feature>
<feature type="sequence conflict" description="In Ref. 2; ABC48669, 3; CAN87942 and 4; AAH78241." evidence="7" ref="2 3 4">
    <original>A</original>
    <variation>S</variation>
    <location>
        <position position="263"/>
    </location>
</feature>
<dbReference type="EMBL" id="AF084948">
    <property type="protein sequence ID" value="AAD09175.1"/>
    <property type="molecule type" value="mRNA"/>
</dbReference>
<dbReference type="EMBL" id="DQ317968">
    <property type="protein sequence ID" value="ABC48669.1"/>
    <property type="molecule type" value="mRNA"/>
</dbReference>
<dbReference type="EMBL" id="BX530078">
    <property type="protein sequence ID" value="CAN87942.1"/>
    <property type="molecule type" value="Genomic_DNA"/>
</dbReference>
<dbReference type="EMBL" id="BX537294">
    <property type="protein sequence ID" value="CAN87834.1"/>
    <property type="molecule type" value="Genomic_DNA"/>
</dbReference>
<dbReference type="EMBL" id="BC078241">
    <property type="protein sequence ID" value="AAH78241.1"/>
    <property type="molecule type" value="mRNA"/>
</dbReference>
<dbReference type="EMBL" id="BC152095">
    <property type="protein sequence ID" value="AAI52096.1"/>
    <property type="molecule type" value="mRNA"/>
</dbReference>
<dbReference type="RefSeq" id="NP_571112.3">
    <molecule id="Q9YHV4-1"/>
    <property type="nucleotide sequence ID" value="NM_131037.3"/>
</dbReference>
<dbReference type="SMR" id="Q9YHV4"/>
<dbReference type="FunCoup" id="Q9YHV4">
    <property type="interactions" value="1587"/>
</dbReference>
<dbReference type="STRING" id="7955.ENSDARP00000122591"/>
<dbReference type="MEROPS" id="I01.966"/>
<dbReference type="GlyCosmos" id="Q9YHV4">
    <property type="glycosylation" value="3 sites, No reported glycans"/>
</dbReference>
<dbReference type="PaxDb" id="7955-ENSDARP00000122591"/>
<dbReference type="Ensembl" id="ENSDART00000051065">
    <molecule id="Q9YHV4-1"/>
    <property type="protein sequence ID" value="ENSDARP00000051064"/>
    <property type="gene ID" value="ENSDARG00000052846"/>
</dbReference>
<dbReference type="Ensembl" id="ENSDART00000163302">
    <molecule id="Q9YHV4-1"/>
    <property type="protein sequence ID" value="ENSDARP00000136983"/>
    <property type="gene ID" value="ENSDARG00000113185"/>
</dbReference>
<dbReference type="GeneID" id="100004116"/>
<dbReference type="KEGG" id="dre:100004116"/>
<dbReference type="AGR" id="ZFIN:ZDB-GENE-990714-11"/>
<dbReference type="CTD" id="100004116"/>
<dbReference type="ZFIN" id="ZDB-GENE-990714-11">
    <property type="gene designation" value="fsta"/>
</dbReference>
<dbReference type="eggNOG" id="KOG3649">
    <property type="taxonomic scope" value="Eukaryota"/>
</dbReference>
<dbReference type="HOGENOM" id="CLU_050745_0_0_1"/>
<dbReference type="InParanoid" id="Q9YHV4"/>
<dbReference type="OMA" id="QRPACVC"/>
<dbReference type="OrthoDB" id="6614329at2759"/>
<dbReference type="PhylomeDB" id="Q9YHV4"/>
<dbReference type="TreeFam" id="TF106409"/>
<dbReference type="Reactome" id="R-DRE-2473224">
    <property type="pathway name" value="Antagonism of Activin by Follistatin"/>
</dbReference>
<dbReference type="PRO" id="PR:Q9YHV4"/>
<dbReference type="Proteomes" id="UP000000437">
    <property type="component" value="Alternate scaffold 5"/>
</dbReference>
<dbReference type="Proteomes" id="UP000000437">
    <property type="component" value="Chromosome 5"/>
</dbReference>
<dbReference type="Bgee" id="ENSDARG00000052846">
    <property type="expression patterns" value="Expressed in swim bladder and 19 other cell types or tissues"/>
</dbReference>
<dbReference type="GO" id="GO:0005576">
    <property type="term" value="C:extracellular region"/>
    <property type="evidence" value="ECO:0000318"/>
    <property type="project" value="GO_Central"/>
</dbReference>
<dbReference type="GO" id="GO:0005615">
    <property type="term" value="C:extracellular space"/>
    <property type="evidence" value="ECO:0000318"/>
    <property type="project" value="GO_Central"/>
</dbReference>
<dbReference type="GO" id="GO:0048185">
    <property type="term" value="F:activin binding"/>
    <property type="evidence" value="ECO:0000318"/>
    <property type="project" value="GO_Central"/>
</dbReference>
<dbReference type="GO" id="GO:0030154">
    <property type="term" value="P:cell differentiation"/>
    <property type="evidence" value="ECO:0000318"/>
    <property type="project" value="GO_Central"/>
</dbReference>
<dbReference type="GO" id="GO:0048263">
    <property type="term" value="P:determination of dorsal identity"/>
    <property type="evidence" value="ECO:0000315"/>
    <property type="project" value="ZFIN"/>
</dbReference>
<dbReference type="GO" id="GO:0009953">
    <property type="term" value="P:dorsal/ventral pattern formation"/>
    <property type="evidence" value="ECO:0000314"/>
    <property type="project" value="ZFIN"/>
</dbReference>
<dbReference type="GO" id="GO:0048703">
    <property type="term" value="P:embryonic viscerocranium morphogenesis"/>
    <property type="evidence" value="ECO:0000315"/>
    <property type="project" value="ZFIN"/>
</dbReference>
<dbReference type="GO" id="GO:0030901">
    <property type="term" value="P:midbrain development"/>
    <property type="evidence" value="ECO:0000315"/>
    <property type="project" value="ZFIN"/>
</dbReference>
<dbReference type="GO" id="GO:0032926">
    <property type="term" value="P:negative regulation of activin receptor signaling pathway"/>
    <property type="evidence" value="ECO:0000318"/>
    <property type="project" value="GO_Central"/>
</dbReference>
<dbReference type="GO" id="GO:0009994">
    <property type="term" value="P:oocyte differentiation"/>
    <property type="evidence" value="ECO:0000303"/>
    <property type="project" value="ZFIN"/>
</dbReference>
<dbReference type="GO" id="GO:0043049">
    <property type="term" value="P:otic placode formation"/>
    <property type="evidence" value="ECO:0000316"/>
    <property type="project" value="ZFIN"/>
</dbReference>
<dbReference type="GO" id="GO:0030510">
    <property type="term" value="P:regulation of BMP signaling pathway"/>
    <property type="evidence" value="ECO:0000318"/>
    <property type="project" value="GO_Central"/>
</dbReference>
<dbReference type="CDD" id="cd00104">
    <property type="entry name" value="KAZAL_FS"/>
    <property type="match status" value="2"/>
</dbReference>
<dbReference type="FunFam" id="3.30.60.30:FF:000005">
    <property type="entry name" value="Follistatin a"/>
    <property type="match status" value="1"/>
</dbReference>
<dbReference type="FunFam" id="3.30.60.30:FF:000006">
    <property type="entry name" value="Follistatin a"/>
    <property type="match status" value="1"/>
</dbReference>
<dbReference type="FunFam" id="3.30.60.30:FF:000009">
    <property type="entry name" value="Follistatin a"/>
    <property type="match status" value="1"/>
</dbReference>
<dbReference type="FunFam" id="3.90.290.10:FF:000013">
    <property type="entry name" value="Follistatin a"/>
    <property type="match status" value="1"/>
</dbReference>
<dbReference type="Gene3D" id="3.30.60.30">
    <property type="match status" value="3"/>
</dbReference>
<dbReference type="Gene3D" id="3.90.290.10">
    <property type="entry name" value="TGF-beta binding (TB) domain"/>
    <property type="match status" value="1"/>
</dbReference>
<dbReference type="InterPro" id="IPR003645">
    <property type="entry name" value="Fol_N"/>
</dbReference>
<dbReference type="InterPro" id="IPR015369">
    <property type="entry name" value="Follistatin/Osteonectin_EGF"/>
</dbReference>
<dbReference type="InterPro" id="IPR002350">
    <property type="entry name" value="Kazal_dom"/>
</dbReference>
<dbReference type="InterPro" id="IPR036058">
    <property type="entry name" value="Kazal_dom_sf"/>
</dbReference>
<dbReference type="InterPro" id="IPR017878">
    <property type="entry name" value="TB_dom"/>
</dbReference>
<dbReference type="InterPro" id="IPR036773">
    <property type="entry name" value="TB_dom_sf"/>
</dbReference>
<dbReference type="PANTHER" id="PTHR13866:SF29">
    <property type="entry name" value="FOLLISTATIN"/>
    <property type="match status" value="1"/>
</dbReference>
<dbReference type="PANTHER" id="PTHR13866">
    <property type="entry name" value="SPARC OSTEONECTIN"/>
    <property type="match status" value="1"/>
</dbReference>
<dbReference type="Pfam" id="PF09289">
    <property type="entry name" value="FOLN"/>
    <property type="match status" value="1"/>
</dbReference>
<dbReference type="Pfam" id="PF21333">
    <property type="entry name" value="FST_N"/>
    <property type="match status" value="1"/>
</dbReference>
<dbReference type="Pfam" id="PF07648">
    <property type="entry name" value="Kazal_2"/>
    <property type="match status" value="3"/>
</dbReference>
<dbReference type="SMART" id="SM00274">
    <property type="entry name" value="FOLN"/>
    <property type="match status" value="3"/>
</dbReference>
<dbReference type="SMART" id="SM00280">
    <property type="entry name" value="KAZAL"/>
    <property type="match status" value="3"/>
</dbReference>
<dbReference type="SUPFAM" id="SSF100895">
    <property type="entry name" value="Kazal-type serine protease inhibitors"/>
    <property type="match status" value="3"/>
</dbReference>
<dbReference type="PROSITE" id="PS51465">
    <property type="entry name" value="KAZAL_2"/>
    <property type="match status" value="3"/>
</dbReference>
<dbReference type="PROSITE" id="PS51364">
    <property type="entry name" value="TB"/>
    <property type="match status" value="1"/>
</dbReference>